<sequence length="249" mass="26678">MRRPIIAGNWKMHNTTEEARDLVTLLRPLVGTARAEVVVCPPFTAIAATVNAASGSNISVGAQDLFWEDKGAYTGEVSGPMLRDLGCRYVIIGHSERRQYFGETDATVNKKLLAAYRNELLPIVCVGETLAEREAGHTLEVVGRQVREGLKGLETGQARDLVVAYEPVWAIGTGKTATAADAQEVIAFIRKTLGEMYGETAAAIRIQYGGSVKPENIAELMAQPDIDGALVGGASLDAVSFAAIVNYDQ</sequence>
<reference key="1">
    <citation type="journal article" date="2008" name="Environ. Microbiol.">
        <title>The complete genome sequence of Moorella thermoacetica (f. Clostridium thermoaceticum).</title>
        <authorList>
            <person name="Pierce E."/>
            <person name="Xie G."/>
            <person name="Barabote R.D."/>
            <person name="Saunders E."/>
            <person name="Han C.S."/>
            <person name="Detter J.C."/>
            <person name="Richardson P."/>
            <person name="Brettin T.S."/>
            <person name="Das A."/>
            <person name="Ljungdahl L.G."/>
            <person name="Ragsdale S.W."/>
        </authorList>
    </citation>
    <scope>NUCLEOTIDE SEQUENCE [LARGE SCALE GENOMIC DNA]</scope>
    <source>
        <strain>ATCC 39073 / JCM 9320</strain>
    </source>
</reference>
<dbReference type="EC" id="5.3.1.1" evidence="1"/>
<dbReference type="EMBL" id="CP000232">
    <property type="protein sequence ID" value="ABC18599.1"/>
    <property type="molecule type" value="Genomic_DNA"/>
</dbReference>
<dbReference type="RefSeq" id="YP_429142.1">
    <property type="nucleotide sequence ID" value="NC_007644.1"/>
</dbReference>
<dbReference type="SMR" id="Q2RLU0"/>
<dbReference type="STRING" id="264732.Moth_0264"/>
<dbReference type="EnsemblBacteria" id="ABC18599">
    <property type="protein sequence ID" value="ABC18599"/>
    <property type="gene ID" value="Moth_0264"/>
</dbReference>
<dbReference type="KEGG" id="mta:Moth_0264"/>
<dbReference type="PATRIC" id="fig|264732.11.peg.281"/>
<dbReference type="eggNOG" id="COG0149">
    <property type="taxonomic scope" value="Bacteria"/>
</dbReference>
<dbReference type="HOGENOM" id="CLU_024251_2_3_9"/>
<dbReference type="OrthoDB" id="9809429at2"/>
<dbReference type="UniPathway" id="UPA00109">
    <property type="reaction ID" value="UER00189"/>
</dbReference>
<dbReference type="UniPathway" id="UPA00138"/>
<dbReference type="GO" id="GO:0005829">
    <property type="term" value="C:cytosol"/>
    <property type="evidence" value="ECO:0007669"/>
    <property type="project" value="TreeGrafter"/>
</dbReference>
<dbReference type="GO" id="GO:0004807">
    <property type="term" value="F:triose-phosphate isomerase activity"/>
    <property type="evidence" value="ECO:0007669"/>
    <property type="project" value="UniProtKB-UniRule"/>
</dbReference>
<dbReference type="GO" id="GO:0006094">
    <property type="term" value="P:gluconeogenesis"/>
    <property type="evidence" value="ECO:0007669"/>
    <property type="project" value="UniProtKB-UniRule"/>
</dbReference>
<dbReference type="GO" id="GO:0046166">
    <property type="term" value="P:glyceraldehyde-3-phosphate biosynthetic process"/>
    <property type="evidence" value="ECO:0007669"/>
    <property type="project" value="TreeGrafter"/>
</dbReference>
<dbReference type="GO" id="GO:0019563">
    <property type="term" value="P:glycerol catabolic process"/>
    <property type="evidence" value="ECO:0007669"/>
    <property type="project" value="TreeGrafter"/>
</dbReference>
<dbReference type="GO" id="GO:0006096">
    <property type="term" value="P:glycolytic process"/>
    <property type="evidence" value="ECO:0007669"/>
    <property type="project" value="UniProtKB-UniRule"/>
</dbReference>
<dbReference type="CDD" id="cd00311">
    <property type="entry name" value="TIM"/>
    <property type="match status" value="1"/>
</dbReference>
<dbReference type="FunFam" id="3.20.20.70:FF:000016">
    <property type="entry name" value="Triosephosphate isomerase"/>
    <property type="match status" value="1"/>
</dbReference>
<dbReference type="Gene3D" id="3.20.20.70">
    <property type="entry name" value="Aldolase class I"/>
    <property type="match status" value="1"/>
</dbReference>
<dbReference type="HAMAP" id="MF_00147_B">
    <property type="entry name" value="TIM_B"/>
    <property type="match status" value="1"/>
</dbReference>
<dbReference type="InterPro" id="IPR013785">
    <property type="entry name" value="Aldolase_TIM"/>
</dbReference>
<dbReference type="InterPro" id="IPR035990">
    <property type="entry name" value="TIM_sf"/>
</dbReference>
<dbReference type="InterPro" id="IPR022896">
    <property type="entry name" value="TrioseP_Isoase_bac/euk"/>
</dbReference>
<dbReference type="InterPro" id="IPR000652">
    <property type="entry name" value="Triosephosphate_isomerase"/>
</dbReference>
<dbReference type="InterPro" id="IPR020861">
    <property type="entry name" value="Triosephosphate_isomerase_AS"/>
</dbReference>
<dbReference type="NCBIfam" id="TIGR00419">
    <property type="entry name" value="tim"/>
    <property type="match status" value="1"/>
</dbReference>
<dbReference type="PANTHER" id="PTHR21139">
    <property type="entry name" value="TRIOSEPHOSPHATE ISOMERASE"/>
    <property type="match status" value="1"/>
</dbReference>
<dbReference type="PANTHER" id="PTHR21139:SF42">
    <property type="entry name" value="TRIOSEPHOSPHATE ISOMERASE"/>
    <property type="match status" value="1"/>
</dbReference>
<dbReference type="Pfam" id="PF00121">
    <property type="entry name" value="TIM"/>
    <property type="match status" value="1"/>
</dbReference>
<dbReference type="SUPFAM" id="SSF51351">
    <property type="entry name" value="Triosephosphate isomerase (TIM)"/>
    <property type="match status" value="1"/>
</dbReference>
<dbReference type="PROSITE" id="PS00171">
    <property type="entry name" value="TIM_1"/>
    <property type="match status" value="1"/>
</dbReference>
<dbReference type="PROSITE" id="PS51440">
    <property type="entry name" value="TIM_2"/>
    <property type="match status" value="1"/>
</dbReference>
<gene>
    <name evidence="1" type="primary">tpiA</name>
    <name type="ordered locus">Moth_0264</name>
</gene>
<comment type="function">
    <text evidence="1">Involved in the gluconeogenesis. Catalyzes stereospecifically the conversion of dihydroxyacetone phosphate (DHAP) to D-glyceraldehyde-3-phosphate (G3P).</text>
</comment>
<comment type="catalytic activity">
    <reaction evidence="1">
        <text>D-glyceraldehyde 3-phosphate = dihydroxyacetone phosphate</text>
        <dbReference type="Rhea" id="RHEA:18585"/>
        <dbReference type="ChEBI" id="CHEBI:57642"/>
        <dbReference type="ChEBI" id="CHEBI:59776"/>
        <dbReference type="EC" id="5.3.1.1"/>
    </reaction>
</comment>
<comment type="pathway">
    <text evidence="1">Carbohydrate biosynthesis; gluconeogenesis.</text>
</comment>
<comment type="pathway">
    <text evidence="1">Carbohydrate degradation; glycolysis; D-glyceraldehyde 3-phosphate from glycerone phosphate: step 1/1.</text>
</comment>
<comment type="subunit">
    <text evidence="1">Homodimer.</text>
</comment>
<comment type="subcellular location">
    <subcellularLocation>
        <location evidence="1">Cytoplasm</location>
    </subcellularLocation>
</comment>
<comment type="similarity">
    <text evidence="1">Belongs to the triosephosphate isomerase family.</text>
</comment>
<organism>
    <name type="scientific">Moorella thermoacetica (strain ATCC 39073 / JCM 9320)</name>
    <dbReference type="NCBI Taxonomy" id="264732"/>
    <lineage>
        <taxon>Bacteria</taxon>
        <taxon>Bacillati</taxon>
        <taxon>Bacillota</taxon>
        <taxon>Clostridia</taxon>
        <taxon>Moorellales</taxon>
        <taxon>Moorellaceae</taxon>
        <taxon>Moorella</taxon>
    </lineage>
</organism>
<evidence type="ECO:0000255" key="1">
    <source>
        <dbReference type="HAMAP-Rule" id="MF_00147"/>
    </source>
</evidence>
<name>TPIS_MOOTA</name>
<keyword id="KW-0963">Cytoplasm</keyword>
<keyword id="KW-0312">Gluconeogenesis</keyword>
<keyword id="KW-0324">Glycolysis</keyword>
<keyword id="KW-0413">Isomerase</keyword>
<feature type="chain" id="PRO_0000307501" description="Triosephosphate isomerase">
    <location>
        <begin position="1"/>
        <end position="249"/>
    </location>
</feature>
<feature type="active site" description="Electrophile" evidence="1">
    <location>
        <position position="94"/>
    </location>
</feature>
<feature type="active site" description="Proton acceptor" evidence="1">
    <location>
        <position position="166"/>
    </location>
</feature>
<feature type="binding site" evidence="1">
    <location>
        <begin position="9"/>
        <end position="11"/>
    </location>
    <ligand>
        <name>substrate</name>
    </ligand>
</feature>
<feature type="binding site" evidence="1">
    <location>
        <position position="172"/>
    </location>
    <ligand>
        <name>substrate</name>
    </ligand>
</feature>
<feature type="binding site" evidence="1">
    <location>
        <position position="211"/>
    </location>
    <ligand>
        <name>substrate</name>
    </ligand>
</feature>
<feature type="binding site" evidence="1">
    <location>
        <begin position="232"/>
        <end position="233"/>
    </location>
    <ligand>
        <name>substrate</name>
    </ligand>
</feature>
<proteinExistence type="inferred from homology"/>
<accession>Q2RLU0</accession>
<protein>
    <recommendedName>
        <fullName evidence="1">Triosephosphate isomerase</fullName>
        <shortName evidence="1">TIM</shortName>
        <shortName evidence="1">TPI</shortName>
        <ecNumber evidence="1">5.3.1.1</ecNumber>
    </recommendedName>
    <alternativeName>
        <fullName evidence="1">Triose-phosphate isomerase</fullName>
    </alternativeName>
</protein>